<feature type="chain" id="PRO_0000434729" description="PAC-1 interacting and coiled-coil domain-containing protein 1" evidence="5">
    <location>
        <begin position="1"/>
        <end position="535"/>
    </location>
</feature>
<feature type="region of interest" description="Disordered" evidence="2">
    <location>
        <begin position="1"/>
        <end position="67"/>
    </location>
</feature>
<feature type="region of interest" description="Disordered" evidence="2">
    <location>
        <begin position="254"/>
        <end position="277"/>
    </location>
</feature>
<feature type="region of interest" description="Disordered" evidence="2">
    <location>
        <begin position="503"/>
        <end position="535"/>
    </location>
</feature>
<feature type="coiled-coil region" evidence="1">
    <location>
        <begin position="109"/>
        <end position="172"/>
    </location>
</feature>
<feature type="coiled-coil region" evidence="1">
    <location>
        <begin position="198"/>
        <end position="242"/>
    </location>
</feature>
<feature type="compositionally biased region" description="Low complexity" evidence="2">
    <location>
        <begin position="36"/>
        <end position="57"/>
    </location>
</feature>
<feature type="compositionally biased region" description="Polar residues" evidence="2">
    <location>
        <begin position="503"/>
        <end position="525"/>
    </location>
</feature>
<feature type="compositionally biased region" description="Low complexity" evidence="2">
    <location>
        <begin position="526"/>
        <end position="535"/>
    </location>
</feature>
<feature type="splice variant" id="VSP_057978" description="In isoform b." evidence="5">
    <location>
        <begin position="1"/>
        <end position="10"/>
    </location>
</feature>
<name>PICC1_CAEEL</name>
<keyword id="KW-0025">Alternative splicing</keyword>
<keyword id="KW-0965">Cell junction</keyword>
<keyword id="KW-0175">Coiled coil</keyword>
<keyword id="KW-1185">Reference proteome</keyword>
<dbReference type="EMBL" id="BX284605">
    <property type="protein sequence ID" value="CCD64130.1"/>
    <property type="molecule type" value="Genomic_DNA"/>
</dbReference>
<dbReference type="EMBL" id="BX284605">
    <property type="protein sequence ID" value="CCD64131.1"/>
    <property type="molecule type" value="Genomic_DNA"/>
</dbReference>
<dbReference type="PIR" id="T31802">
    <property type="entry name" value="T31802"/>
</dbReference>
<dbReference type="RefSeq" id="NP_001370415.1">
    <molecule id="H2KYP0-2"/>
    <property type="nucleotide sequence ID" value="NM_001383314.2"/>
</dbReference>
<dbReference type="RefSeq" id="NP_504560.1">
    <molecule id="H2KYP0-1"/>
    <property type="nucleotide sequence ID" value="NM_072159.7"/>
</dbReference>
<dbReference type="RefSeq" id="NP_872141.1">
    <property type="nucleotide sequence ID" value="NM_182341.4"/>
</dbReference>
<dbReference type="SMR" id="H2KYP0"/>
<dbReference type="DIP" id="DIP-61636N"/>
<dbReference type="FunCoup" id="H2KYP0">
    <property type="interactions" value="3"/>
</dbReference>
<dbReference type="IntAct" id="H2KYP0">
    <property type="interactions" value="9"/>
</dbReference>
<dbReference type="MINT" id="H2KYP0"/>
<dbReference type="STRING" id="6239.F29G9.2a.1"/>
<dbReference type="PaxDb" id="6239-F29G9.2a"/>
<dbReference type="EnsemblMetazoa" id="F29G9.2a.1">
    <molecule id="H2KYP0-1"/>
    <property type="protein sequence ID" value="F29G9.2a.1"/>
    <property type="gene ID" value="WBGene00017931"/>
</dbReference>
<dbReference type="EnsemblMetazoa" id="F29G9.2b.1">
    <molecule id="H2KYP0-2"/>
    <property type="protein sequence ID" value="F29G9.2b.1"/>
    <property type="gene ID" value="WBGene00017931"/>
</dbReference>
<dbReference type="GeneID" id="3564810"/>
<dbReference type="KEGG" id="cel:CELE_F29G9.2"/>
<dbReference type="UCSC" id="F29G9.2a">
    <property type="organism name" value="c. elegans"/>
</dbReference>
<dbReference type="AGR" id="WB:WBGene00017931"/>
<dbReference type="CTD" id="3564810"/>
<dbReference type="WormBase" id="F29G9.2a">
    <molecule id="H2KYP0-1"/>
    <property type="protein sequence ID" value="CE27374"/>
    <property type="gene ID" value="WBGene00017931"/>
    <property type="gene designation" value="picc-1"/>
</dbReference>
<dbReference type="WormBase" id="F29G9.2b">
    <molecule id="H2KYP0-2"/>
    <property type="protein sequence ID" value="CE09796"/>
    <property type="gene ID" value="WBGene00017931"/>
    <property type="gene designation" value="picc-1"/>
</dbReference>
<dbReference type="eggNOG" id="KOG3819">
    <property type="taxonomic scope" value="Eukaryota"/>
</dbReference>
<dbReference type="GeneTree" id="ENSGT00940000170945"/>
<dbReference type="InParanoid" id="H2KYP0"/>
<dbReference type="OMA" id="TIIERGW"/>
<dbReference type="OrthoDB" id="10056395at2759"/>
<dbReference type="SignaLink" id="H2KYP0"/>
<dbReference type="PRO" id="PR:H2KYP0"/>
<dbReference type="Proteomes" id="UP000001940">
    <property type="component" value="Chromosome V"/>
</dbReference>
<dbReference type="Bgee" id="WBGene00017931">
    <property type="expression patterns" value="Expressed in embryo and 4 other cell types or tissues"/>
</dbReference>
<dbReference type="GO" id="GO:0005912">
    <property type="term" value="C:adherens junction"/>
    <property type="evidence" value="ECO:0007669"/>
    <property type="project" value="UniProtKB-SubCell"/>
</dbReference>
<dbReference type="InterPro" id="IPR019359">
    <property type="entry name" value="CCDC85"/>
</dbReference>
<dbReference type="PANTHER" id="PTHR13546:SF15">
    <property type="entry name" value="CCDC85"/>
    <property type="match status" value="1"/>
</dbReference>
<dbReference type="PANTHER" id="PTHR13546">
    <property type="entry name" value="RE60986P"/>
    <property type="match status" value="1"/>
</dbReference>
<dbReference type="Pfam" id="PF10226">
    <property type="entry name" value="CCDC85"/>
    <property type="match status" value="1"/>
</dbReference>
<comment type="function">
    <text evidence="3">Linker protein which helps to recruit the Rho GTPase-activating protein, pac-1, to adherens junctions.</text>
</comment>
<comment type="subunit">
    <text evidence="3">Interacts with pac-1 and jac-1.</text>
</comment>
<comment type="interaction">
    <interactant intactId="EBI-315998">
        <id>H2KYP0</id>
    </interactant>
    <interactant intactId="EBI-2917356">
        <id>Q9U308</id>
        <label>jac-1</label>
    </interactant>
    <organismsDiffer>false</organismsDiffer>
    <experiments>3</experiments>
</comment>
<comment type="interaction">
    <interactant intactId="EBI-315998">
        <id>H2KYP0</id>
    </interactant>
    <interactant intactId="EBI-2918318">
        <id>P34288</id>
        <label>pac-1</label>
    </interactant>
    <organismsDiffer>false</organismsDiffer>
    <experiments>4</experiments>
</comment>
<comment type="subcellular location">
    <subcellularLocation>
        <location evidence="3">Cell junction</location>
        <location evidence="3">Adherens junction</location>
    </subcellularLocation>
</comment>
<comment type="alternative products">
    <event type="alternative splicing"/>
    <isoform>
        <id>H2KYP0-1</id>
        <name evidence="7">a</name>
        <sequence type="displayed"/>
    </isoform>
    <isoform>
        <id>H2KYP0-2</id>
        <name evidence="8">b</name>
        <sequence type="described" ref="VSP_057978"/>
    </isoform>
</comment>
<comment type="developmental stage">
    <text evidence="3">Expressed in four-cell stage embryos.</text>
</comment>
<comment type="disruption phenotype">
    <text evidence="3">Mutants are 97% viable. However, the Rho GTPase-activating protein, pac-1, does not localize to adherens junctions.</text>
</comment>
<comment type="similarity">
    <text evidence="5">Belongs to the CCDC85 family.</text>
</comment>
<protein>
    <recommendedName>
        <fullName evidence="4">PAC-1 interacting and coiled-coil domain-containing protein 1</fullName>
    </recommendedName>
</protein>
<sequence>MIITTPRRANMSSESGSSASTVHYAKPVLRHVPMPSSTTPSSIGSSSSSSSSYASSTKQTPPRSPVIRYPTVVVSKNSIATPSSSLTPQGTPSYAVPVSRNQMQYSASKLQYEHMRHRCKMLDDENQKLMRMQSDVVNDANRRVQMHVNEIRMLKEDNRKLAISNKELRDLSCFLDDDRQKTRKLAREWQKFGRYTSSLMKQEVDSYHQKMVSIEEKLCTKEREVDELRQLCMYLDEQRQSLMSNAAANVDCDNESEDLGCGSSEQSGGSEGHNDEEKHHEFNKCFNKHKESTLRRIMATSMCSEPSEEEERREVSKRERSRLLGYIQSLENRIKHLEMSQNHESFWNSSSNVGSDCDEKTIIERGWLGEEVMSNSEDCHLELKPVMTTSSTSSSHIFGNDKCPMFDSMTSNMTSSGCTTYASSGTDGDSVFVIGDEIDIGNLEVRTLSRIDEEATSASDTLKESARMPPKIAPPICSSLVLTNFDNMSEDCAPRLMRSASETCRPTTTLISSTQPAQRSVSVEKNNNNNVHTHN</sequence>
<proteinExistence type="evidence at protein level"/>
<reference evidence="6" key="1">
    <citation type="journal article" date="1998" name="Science">
        <title>Genome sequence of the nematode C. elegans: a platform for investigating biology.</title>
        <authorList>
            <consortium name="The C. elegans sequencing consortium"/>
        </authorList>
    </citation>
    <scope>NUCLEOTIDE SEQUENCE [LARGE SCALE GENOMIC DNA]</scope>
    <source>
        <strain evidence="6">Bristol N2</strain>
    </source>
</reference>
<reference evidence="5" key="2">
    <citation type="journal article" date="2015" name="Nat. Cell Biol.">
        <title>An instructive role for C. elegans E-cadherin in translating cell contact cues into cortical polarity.</title>
        <authorList>
            <person name="Klompstra D."/>
            <person name="Anderson D.C."/>
            <person name="Yeh J.Y."/>
            <person name="Zilberman Y."/>
            <person name="Nance J."/>
        </authorList>
    </citation>
    <scope>FUNCTION</scope>
    <scope>INTERACTION WITH PAC-1 AND JAC-1</scope>
    <scope>SUBCELLULAR LOCATION</scope>
    <scope>DEVELOPMENTAL STAGE</scope>
    <scope>DISRUPTION PHENOTYPE</scope>
</reference>
<evidence type="ECO:0000255" key="1"/>
<evidence type="ECO:0000256" key="2">
    <source>
        <dbReference type="SAM" id="MobiDB-lite"/>
    </source>
</evidence>
<evidence type="ECO:0000269" key="3">
    <source>
    </source>
</evidence>
<evidence type="ECO:0000303" key="4">
    <source>
    </source>
</evidence>
<evidence type="ECO:0000305" key="5"/>
<evidence type="ECO:0000312" key="6">
    <source>
        <dbReference type="Proteomes" id="UP000001940"/>
    </source>
</evidence>
<evidence type="ECO:0000312" key="7">
    <source>
        <dbReference type="WormBase" id="F29G9.2a"/>
    </source>
</evidence>
<evidence type="ECO:0000312" key="8">
    <source>
        <dbReference type="WormBase" id="F29G9.2b"/>
    </source>
</evidence>
<organism evidence="6">
    <name type="scientific">Caenorhabditis elegans</name>
    <dbReference type="NCBI Taxonomy" id="6239"/>
    <lineage>
        <taxon>Eukaryota</taxon>
        <taxon>Metazoa</taxon>
        <taxon>Ecdysozoa</taxon>
        <taxon>Nematoda</taxon>
        <taxon>Chromadorea</taxon>
        <taxon>Rhabditida</taxon>
        <taxon>Rhabditina</taxon>
        <taxon>Rhabditomorpha</taxon>
        <taxon>Rhabditoidea</taxon>
        <taxon>Rhabditidae</taxon>
        <taxon>Peloderinae</taxon>
        <taxon>Caenorhabditis</taxon>
    </lineage>
</organism>
<accession>H2KYP0</accession>
<accession>Q8IA85</accession>
<gene>
    <name evidence="7" type="primary">picc-1</name>
    <name evidence="7" type="ORF">F29G9.2</name>
</gene>